<keyword id="KW-0067">ATP-binding</keyword>
<keyword id="KW-0150">Chloroplast</keyword>
<keyword id="KW-0547">Nucleotide-binding</keyword>
<keyword id="KW-0934">Plastid</keyword>
<geneLocation type="chloroplast"/>
<sequence>MKGHQFKSWIFELREIVREIKNSHYFLDSWTQFNSVGSFIHIFFHQERFRKLLDPRIFSILLLRNSQGSTSNRYFTIKGVVLFVVAALLYRINNRNMVESKNLYLKGLLPIPMNSIGPRNDTSEESFGSSNINRLIVSLLYLTKGKKISESCFRDPKESTWVLPITQKCIMPESNWSSRWWRNWIGKKRDFCCKISNQTVAGIDISFKEKDIKYLEFLFVYYMDDPIRKGHDWELFDRLSPSKRRNIINLNSGQLFEILVKDWICYLMFAFREKIPIEVEGFFKQQGAGSTIQSNDIEHVSHLFSRNKWAISLQNCAQFHMWQFHQDLFVSWGKNPHESDFLRKISRENWIWLDNVWLVNKDRFFSKVRNVSSNIQYDSTRSSFVQVTDSSQLNGSSDQFIDPFDSISNEDSEYHYHTLINQREIQQLKERSILLDPSFIQTEGREIESDRFPKYLSGYSSMPRLFTEREKRMNNHLLPEESEEFLGNPTRAIRSFFSDRWSELHLGSNPTERSTRDQKLLKKEQDVSFVPSRRSENKEIVNIFKIITYLQNTVSIHSISSDLGCDMVPKDELDMDSSNKISFLNKNPFFDLFHLFHERKRGGYTLRHESEERFQEMADLFTLSITEPDLVYHKGFAFSIDSYGLDQRQFLKEVFNFRDESKKKSLLVLPPIFYEENESFYRRIRKNWVRISCGNYLEDPKRVVFASNNIMEAVNQYRLIRNMIQIQFQYSPYGYIRNVLNRFFLMKRPDRNFEYGIQRDLIGNDTLNHRTIMKDTINQHLSNLKKSQKKWFDPLIFLSQTERSINRDPNAYRYKWSNGSKNFQEHLEHFVSERKSRFQVVFDQLCINQYSIDWSEVIDKKDLSKSLRFFLSKLLRFFLSKLLLFLSKLLLFLSNSLPFFFVSFENIPIHRSEIHIYELKGPNDQLCNQLLESIGLQIVHLKKLKPFLLDDHNTSQKSKFLINGGTISPFLFNKIPKWMIDSFHTRKNRRKSFDNTDSYFSIVSHDQDNWLNPVKPFQRSSLISSFSKANRLRFLNNPHHFCFYCNKRFPFYVEKARLNNSDFTYGQFLTILFIHNKIFSSCGGKKKHAFLERDTISPSSIESQVSNIFISNDFPQSGDERYNLYKSFHFPIRSDPLVRRAIYSIADISGTPLIEGQRVNFERTYCQTLSDMNLSDSEEKSLHQYLNFNSNMGLIHTPCSEKYLQRKKRSLCLKKCVDKGQMDRTFQRDSAFSTLSKWNLIQTYMPWFFTSTGYKYLNLIFLDTFSDLLRILSSSQKFVSIFHDIMHGLDISWRILQKKLCLPQRNLISEISSKSLHNLLLSEEMIHRNNESSLISTHLRSPNVREVLYSILFLLLVAGYIVRTHLLFVSRAYSELQTEFEKIKSLMIPSYMIELRKLLDRYPTSELNSFWLKNLFLVALEQLGDCLEEIRGSGGNMLWGGDPAYGVKSIRSKKKDLKINFIDIIDLISIIPNPINRITFSRNTRHLSHTSKEIYSLIRKRKNVSGDWIDDKIESWVANSDSIDDKEREFLVQFSTLRAEKRIDQILLSLTHSDHLSKNDSGYQMIEQPGTIYLRYLVDIHKKYLMNYEFNTSCLAERRIFLAHYQTITYSQTSCGANSFHFPSHGKPFSLRLALSPSRSILVIGSIGTGRSYLVKYLATNSYVPFITVFLNKFLDNKPKGFFIDDIDIDDSDDIDASNDIDRELDTELELLTMMNALTMDMMSEIDRFYITLQFELAKAMSPCIIWIPNIHDLDVNESSYLALGLLVNSLSRDCERCSTRNILVIASTHIPQKVDPALIAPNKLNTCIKIRRLLIPQQRKHFFTLSYTRGFHLEKKMFHTNGFESITMGSSARDLVALTNEALSISITQKKSIIDTNTIRSALHRQTWDLRSQVRSVQDHGILFYQIGRAVAQNVLISNCPIDPISIYMKKKSCNEGDSYLYKWYFELGTSMKKFTILLYLLSCSAGSVAQDLWSLPVPDEKNRITSYGFIENDSDLVHGLLEVQGALVGSSRTEKDCSQFDNDRVTLLFRSEPRDPLYMMQDGSCSIVDQRFLYEKYESEFEEGEGEGVLDPQQIEEDLFNHIVWAPRIWRPRGFLFDCIERPNELGFPYLAGSFRGKRIIYDEKYELQENDSEFLQSGTMQYQRRDRSSKEQGFFRISQFIWDPADPLFFLFKDQPFVSVFSHREFFADEEMSKGLLTSQTDPPTSIYKRWFIKNTQEKHFELLIQRQRWLRTNSSLSNGFFRSNTRSESYQYLSNLFLSNGTLLDRMTKTLLKKRWLFSDEMKTGFM</sequence>
<proteinExistence type="inferred from homology"/>
<protein>
    <recommendedName>
        <fullName evidence="1">Protein Ycf2</fullName>
    </recommendedName>
</protein>
<dbReference type="EMBL" id="AP009368">
    <property type="protein sequence ID" value="BAF49982.1"/>
    <property type="molecule type" value="Genomic_DNA"/>
</dbReference>
<dbReference type="EMBL" id="AP009368">
    <property type="protein sequence ID" value="BAF50001.1"/>
    <property type="molecule type" value="Genomic_DNA"/>
</dbReference>
<dbReference type="GO" id="GO:0009570">
    <property type="term" value="C:chloroplast stroma"/>
    <property type="evidence" value="ECO:0007669"/>
    <property type="project" value="UniProtKB-SubCell"/>
</dbReference>
<dbReference type="GO" id="GO:0005524">
    <property type="term" value="F:ATP binding"/>
    <property type="evidence" value="ECO:0007669"/>
    <property type="project" value="UniProtKB-KW"/>
</dbReference>
<dbReference type="GO" id="GO:0016887">
    <property type="term" value="F:ATP hydrolysis activity"/>
    <property type="evidence" value="ECO:0007669"/>
    <property type="project" value="InterPro"/>
</dbReference>
<dbReference type="CDD" id="cd19505">
    <property type="entry name" value="RecA-like_Ycf2"/>
    <property type="match status" value="1"/>
</dbReference>
<dbReference type="Gene3D" id="3.40.50.300">
    <property type="entry name" value="P-loop containing nucleotide triphosphate hydrolases"/>
    <property type="match status" value="1"/>
</dbReference>
<dbReference type="HAMAP" id="MF_01330">
    <property type="entry name" value="Ycf2"/>
    <property type="match status" value="1"/>
</dbReference>
<dbReference type="InterPro" id="IPR003593">
    <property type="entry name" value="AAA+_ATPase"/>
</dbReference>
<dbReference type="InterPro" id="IPR003959">
    <property type="entry name" value="ATPase_AAA_core"/>
</dbReference>
<dbReference type="InterPro" id="IPR027417">
    <property type="entry name" value="P-loop_NTPase"/>
</dbReference>
<dbReference type="InterPro" id="IPR008543">
    <property type="entry name" value="Uncharacterised_Ycf2"/>
</dbReference>
<dbReference type="InterPro" id="IPR056777">
    <property type="entry name" value="Ycf2_N"/>
</dbReference>
<dbReference type="PANTHER" id="PTHR33078:SF89">
    <property type="entry name" value="PROTEIN YCF2"/>
    <property type="match status" value="1"/>
</dbReference>
<dbReference type="PANTHER" id="PTHR33078">
    <property type="entry name" value="PROTEIN YCF2-RELATED"/>
    <property type="match status" value="1"/>
</dbReference>
<dbReference type="Pfam" id="PF00004">
    <property type="entry name" value="AAA"/>
    <property type="match status" value="1"/>
</dbReference>
<dbReference type="Pfam" id="PF05695">
    <property type="entry name" value="Ycf2"/>
    <property type="match status" value="1"/>
</dbReference>
<dbReference type="SMART" id="SM00382">
    <property type="entry name" value="AAA"/>
    <property type="match status" value="1"/>
</dbReference>
<dbReference type="SUPFAM" id="SSF52540">
    <property type="entry name" value="P-loop containing nucleoside triphosphate hydrolases"/>
    <property type="match status" value="1"/>
</dbReference>
<name>YCF2_OLIPU</name>
<reference key="1">
    <citation type="submission" date="2007-03" db="EMBL/GenBank/DDBJ databases">
        <title>Sequence analysis of Arabidopsis pumila JS2 chloroplast DNA.</title>
        <authorList>
            <person name="Hosouchi T."/>
            <person name="Tsuruoka H."/>
            <person name="Kotani H."/>
        </authorList>
    </citation>
    <scope>NUCLEOTIDE SEQUENCE [LARGE SCALE GENOMIC DNA]</scope>
</reference>
<feature type="chain" id="PRO_0000343787" description="Protein Ycf2">
    <location>
        <begin position="1"/>
        <end position="2291"/>
    </location>
</feature>
<feature type="binding site" evidence="1">
    <location>
        <begin position="1645"/>
        <end position="1652"/>
    </location>
    <ligand>
        <name>ATP</name>
        <dbReference type="ChEBI" id="CHEBI:30616"/>
    </ligand>
</feature>
<comment type="function">
    <text evidence="1">Probable ATPase of unknown function. Its presence in a non-photosynthetic plant (Epifagus virginiana) and experiments in tobacco indicate that it has an essential function which is probably not related to photosynthesis.</text>
</comment>
<comment type="subcellular location">
    <subcellularLocation>
        <location evidence="1">Plastid</location>
        <location evidence="1">Chloroplast stroma</location>
    </subcellularLocation>
</comment>
<comment type="similarity">
    <text evidence="1">Belongs to the Ycf2 family.</text>
</comment>
<organism>
    <name type="scientific">Olimarabidopsis pumila</name>
    <name type="common">Dwarf rocket</name>
    <name type="synonym">Arabidopsis griffithiana</name>
    <dbReference type="NCBI Taxonomy" id="74718"/>
    <lineage>
        <taxon>Eukaryota</taxon>
        <taxon>Viridiplantae</taxon>
        <taxon>Streptophyta</taxon>
        <taxon>Embryophyta</taxon>
        <taxon>Tracheophyta</taxon>
        <taxon>Spermatophyta</taxon>
        <taxon>Magnoliopsida</taxon>
        <taxon>eudicotyledons</taxon>
        <taxon>Gunneridae</taxon>
        <taxon>Pentapetalae</taxon>
        <taxon>rosids</taxon>
        <taxon>malvids</taxon>
        <taxon>Brassicales</taxon>
        <taxon>Brassicaceae</taxon>
        <taxon>Alyssopsideae</taxon>
        <taxon>Olimarabidopsis</taxon>
    </lineage>
</organism>
<evidence type="ECO:0000255" key="1">
    <source>
        <dbReference type="HAMAP-Rule" id="MF_01330"/>
    </source>
</evidence>
<gene>
    <name evidence="1" type="primary">ycf2-A</name>
</gene>
<gene>
    <name evidence="1" type="primary">ycf2-B</name>
</gene>
<accession>A4QJX4</accession>